<feature type="chain" id="PRO_0000400080" description="Protein ZINC INDUCED FACILITATOR 1">
    <location>
        <begin position="1"/>
        <end position="486"/>
    </location>
</feature>
<feature type="transmembrane region" description="Helical" evidence="1">
    <location>
        <begin position="41"/>
        <end position="61"/>
    </location>
</feature>
<feature type="transmembrane region" description="Helical" evidence="1">
    <location>
        <begin position="82"/>
        <end position="102"/>
    </location>
</feature>
<feature type="transmembrane region" description="Helical" evidence="1">
    <location>
        <begin position="109"/>
        <end position="129"/>
    </location>
</feature>
<feature type="transmembrane region" description="Helical" evidence="1">
    <location>
        <begin position="131"/>
        <end position="151"/>
    </location>
</feature>
<feature type="transmembrane region" description="Helical" evidence="1">
    <location>
        <begin position="170"/>
        <end position="190"/>
    </location>
</feature>
<feature type="transmembrane region" description="Helical" evidence="1">
    <location>
        <begin position="212"/>
        <end position="232"/>
    </location>
</feature>
<feature type="transmembrane region" description="Helical" evidence="1">
    <location>
        <begin position="288"/>
        <end position="308"/>
    </location>
</feature>
<feature type="transmembrane region" description="Helical" evidence="1">
    <location>
        <begin position="327"/>
        <end position="347"/>
    </location>
</feature>
<feature type="transmembrane region" description="Helical" evidence="1">
    <location>
        <begin position="362"/>
        <end position="384"/>
    </location>
</feature>
<feature type="transmembrane region" description="Helical" evidence="1">
    <location>
        <begin position="391"/>
        <end position="408"/>
    </location>
</feature>
<feature type="transmembrane region" description="Helical" evidence="1">
    <location>
        <begin position="423"/>
        <end position="443"/>
    </location>
</feature>
<feature type="transmembrane region" description="Helical" evidence="1">
    <location>
        <begin position="461"/>
        <end position="481"/>
    </location>
</feature>
<feature type="mutagenesis site" description="In zif1-3; zinc sensitivity." evidence="3">
    <original>G</original>
    <variation>R</variation>
    <location>
        <position position="472"/>
    </location>
</feature>
<reference key="1">
    <citation type="journal article" date="1998" name="DNA Res.">
        <title>Structural analysis of Arabidopsis thaliana chromosome 5. V. Sequence features of the regions of 1,381,565 bp covered by twenty one physically assigned P1 and TAC clones.</title>
        <authorList>
            <person name="Kaneko T."/>
            <person name="Kotani H."/>
            <person name="Nakamura Y."/>
            <person name="Sato S."/>
            <person name="Asamizu E."/>
            <person name="Miyajima N."/>
            <person name="Tabata S."/>
        </authorList>
    </citation>
    <scope>NUCLEOTIDE SEQUENCE [LARGE SCALE GENOMIC DNA]</scope>
    <source>
        <strain>cv. Columbia</strain>
    </source>
</reference>
<reference key="2">
    <citation type="journal article" date="1997" name="DNA Res.">
        <title>Structural analysis of Arabidopsis thaliana chromosome 5. II. Sequence features of the regions of 1,044,062 bp covered by thirteen physically assigned P1 clones.</title>
        <authorList>
            <person name="Kotani H."/>
            <person name="Nakamura Y."/>
            <person name="Sato S."/>
            <person name="Kaneko T."/>
            <person name="Asamizu E."/>
            <person name="Miyajima N."/>
            <person name="Tabata S."/>
        </authorList>
    </citation>
    <scope>NUCLEOTIDE SEQUENCE [LARGE SCALE GENOMIC DNA]</scope>
    <source>
        <strain>cv. Columbia</strain>
    </source>
</reference>
<reference key="3">
    <citation type="journal article" date="2017" name="Plant J.">
        <title>Araport11: a complete reannotation of the Arabidopsis thaliana reference genome.</title>
        <authorList>
            <person name="Cheng C.Y."/>
            <person name="Krishnakumar V."/>
            <person name="Chan A.P."/>
            <person name="Thibaud-Nissen F."/>
            <person name="Schobel S."/>
            <person name="Town C.D."/>
        </authorList>
    </citation>
    <scope>GENOME REANNOTATION</scope>
    <source>
        <strain>cv. Columbia</strain>
    </source>
</reference>
<reference key="4">
    <citation type="journal article" date="2003" name="Science">
        <title>Empirical analysis of transcriptional activity in the Arabidopsis genome.</title>
        <authorList>
            <person name="Yamada K."/>
            <person name="Lim J."/>
            <person name="Dale J.M."/>
            <person name="Chen H."/>
            <person name="Shinn P."/>
            <person name="Palm C.J."/>
            <person name="Southwick A.M."/>
            <person name="Wu H.C."/>
            <person name="Kim C.J."/>
            <person name="Nguyen M."/>
            <person name="Pham P.K."/>
            <person name="Cheuk R.F."/>
            <person name="Karlin-Newmann G."/>
            <person name="Liu S.X."/>
            <person name="Lam B."/>
            <person name="Sakano H."/>
            <person name="Wu T."/>
            <person name="Yu G."/>
            <person name="Miranda M."/>
            <person name="Quach H.L."/>
            <person name="Tripp M."/>
            <person name="Chang C.H."/>
            <person name="Lee J.M."/>
            <person name="Toriumi M.J."/>
            <person name="Chan M.M."/>
            <person name="Tang C.C."/>
            <person name="Onodera C.S."/>
            <person name="Deng J.M."/>
            <person name="Akiyama K."/>
            <person name="Ansari Y."/>
            <person name="Arakawa T."/>
            <person name="Banh J."/>
            <person name="Banno F."/>
            <person name="Bowser L."/>
            <person name="Brooks S.Y."/>
            <person name="Carninci P."/>
            <person name="Chao Q."/>
            <person name="Choy N."/>
            <person name="Enju A."/>
            <person name="Goldsmith A.D."/>
            <person name="Gurjal M."/>
            <person name="Hansen N.F."/>
            <person name="Hayashizaki Y."/>
            <person name="Johnson-Hopson C."/>
            <person name="Hsuan V.W."/>
            <person name="Iida K."/>
            <person name="Karnes M."/>
            <person name="Khan S."/>
            <person name="Koesema E."/>
            <person name="Ishida J."/>
            <person name="Jiang P.X."/>
            <person name="Jones T."/>
            <person name="Kawai J."/>
            <person name="Kamiya A."/>
            <person name="Meyers C."/>
            <person name="Nakajima M."/>
            <person name="Narusaka M."/>
            <person name="Seki M."/>
            <person name="Sakurai T."/>
            <person name="Satou M."/>
            <person name="Tamse R."/>
            <person name="Vaysberg M."/>
            <person name="Wallender E.K."/>
            <person name="Wong C."/>
            <person name="Yamamura Y."/>
            <person name="Yuan S."/>
            <person name="Shinozaki K."/>
            <person name="Davis R.W."/>
            <person name="Theologis A."/>
            <person name="Ecker J.R."/>
        </authorList>
    </citation>
    <scope>NUCLEOTIDE SEQUENCE [LARGE SCALE MRNA]</scope>
    <source>
        <strain>cv. Columbia</strain>
    </source>
</reference>
<reference key="5">
    <citation type="journal article" date="2005" name="Mol. Plant Microbe Interact.">
        <title>Nematode-induced changes of transporter gene expression in Arabidopsis roots.</title>
        <authorList>
            <person name="Hammes U.Z."/>
            <person name="Schachtman D.P."/>
            <person name="Berg R.H."/>
            <person name="Nielsen E."/>
            <person name="Koch W."/>
            <person name="McIntyre L.M."/>
            <person name="Taylor C.G."/>
        </authorList>
    </citation>
    <scope>INDUCTION BY NEMATODES</scope>
</reference>
<reference key="6">
    <citation type="journal article" date="2007" name="Plant Physiol.">
        <title>A novel major facilitator superfamily protein at the tonoplast influences zinc tolerance and accumulation in Arabidopsis.</title>
        <authorList>
            <person name="Haydon M.J."/>
            <person name="Cobbett C.S."/>
        </authorList>
    </citation>
    <scope>FUNCTION</scope>
    <scope>MUTAGENESIS OF GLY-472</scope>
    <scope>TISSUE SPECIFICITY</scope>
    <scope>SUBCELLULAR LOCATION</scope>
    <scope>INDUCTION BY METAL</scope>
    <scope>DISRUPTION PHENOTYPE</scope>
</reference>
<sequence>MAEEYKEALLEKQNYHDGCPGCKVEQMKQLRRGYPYLELSFVWIIVLSTSLPISSLYPFLYYMIEDFGVAKTEKDIGFYAGFVGCSFMLGRALTSVFWGIVADRYGRKPIILLGTISIAIFNALFGLSSNFWMAIGTRFLLGSFNCLLGTMKAYASEIFRDEYQATAMSAVSTAWGIGLIIGPALGGFLAQPADKYPNVFSQESLFGRFRYALPCFTISAFALLVTVLCCFIPETLHNHKLDSLSHDDSYDILEAASHESSPSTGKAGKNERKASQSLLKNWPLMSSIIVYCVLCLHDTAYSEIFALWANSPRKYGGLSYSTNEVGTVLAISGLGLFSFQVFVYPLAEKLLGPVLVTRYAGALMIPIQMSYPFIAGLSGLSLSLMLNCASILINVLSVSAITGLLILQNRAVDQSQRGAANGIAMTAMSLFKTVGPAGAGILFSWSERRLNAAFLPGSHMVFFVLNVIVVVGVALTFKPFLTTSRR</sequence>
<gene>
    <name type="primary">ZIF1</name>
    <name type="ordered locus">At5g13740</name>
    <name type="ORF">MSH12.21</name>
</gene>
<accession>Q8RWN2</accession>
<accession>Q9FKI8</accession>
<organism>
    <name type="scientific">Arabidopsis thaliana</name>
    <name type="common">Mouse-ear cress</name>
    <dbReference type="NCBI Taxonomy" id="3702"/>
    <lineage>
        <taxon>Eukaryota</taxon>
        <taxon>Viridiplantae</taxon>
        <taxon>Streptophyta</taxon>
        <taxon>Embryophyta</taxon>
        <taxon>Tracheophyta</taxon>
        <taxon>Spermatophyta</taxon>
        <taxon>Magnoliopsida</taxon>
        <taxon>eudicotyledons</taxon>
        <taxon>Gunneridae</taxon>
        <taxon>Pentapetalae</taxon>
        <taxon>rosids</taxon>
        <taxon>malvids</taxon>
        <taxon>Brassicales</taxon>
        <taxon>Brassicaceae</taxon>
        <taxon>Camelineae</taxon>
        <taxon>Arabidopsis</taxon>
    </lineage>
</organism>
<name>ZIF1_ARATH</name>
<evidence type="ECO:0000255" key="1"/>
<evidence type="ECO:0000269" key="2">
    <source>
    </source>
</evidence>
<evidence type="ECO:0000269" key="3">
    <source>
    </source>
</evidence>
<evidence type="ECO:0000305" key="4"/>
<comment type="function">
    <text evidence="3">Major facilitator superfamily (MFS) transporter involved in zinc tolerance by participating in vacuolar sequestration of zinc.</text>
</comment>
<comment type="subcellular location">
    <subcellularLocation>
        <location evidence="3">Vacuole membrane</location>
        <topology evidence="3">Multi-pass membrane protein</topology>
    </subcellularLocation>
</comment>
<comment type="tissue specificity">
    <text evidence="3">Strongly expressed in developing leaves, differentiating zones of root tips and sepals of developing flowers. Restricted to vascular tissues in older leaves, mature roots, flowers, anthers and filaments. Not expressed in developing anthers.</text>
</comment>
<comment type="induction">
    <text evidence="2 3">Up-regulated by zinc and manganese. Not induced by cadmium, copper or iron. Down-regulated upon nematode infection.</text>
</comment>
<comment type="disruption phenotype">
    <text evidence="3">Zinc sensitivity resulting in increased chlorosis and decreased shoot fresh weight and root length. Accumulation of high levels of zinc in shoots.</text>
</comment>
<comment type="miscellaneous">
    <text>Overexpression of ZIF1 confers increased zinc tolerance and causes interveinal leaf chlorosis.</text>
</comment>
<comment type="similarity">
    <text evidence="4">Belongs to the major facilitator superfamily.</text>
</comment>
<comment type="sequence caution" evidence="4">
    <conflict type="frameshift">
        <sequence resource="EMBL-CDS" id="AAM12978"/>
    </conflict>
</comment>
<comment type="sequence caution" evidence="4">
    <conflict type="erroneous gene model prediction">
        <sequence resource="EMBL-CDS" id="BAB10595"/>
    </conflict>
</comment>
<dbReference type="EMBL" id="AB011484">
    <property type="protein sequence ID" value="BAB10595.1"/>
    <property type="status" value="ALT_SEQ"/>
    <property type="molecule type" value="Genomic_DNA"/>
</dbReference>
<dbReference type="EMBL" id="AB006704">
    <property type="protein sequence ID" value="BAB10595.1"/>
    <property type="status" value="JOINED"/>
    <property type="molecule type" value="Genomic_DNA"/>
</dbReference>
<dbReference type="EMBL" id="CP002688">
    <property type="protein sequence ID" value="AED91934.1"/>
    <property type="molecule type" value="Genomic_DNA"/>
</dbReference>
<dbReference type="EMBL" id="AY092979">
    <property type="protein sequence ID" value="AAM12978.1"/>
    <property type="status" value="ALT_FRAME"/>
    <property type="molecule type" value="mRNA"/>
</dbReference>
<dbReference type="EMBL" id="AY128800">
    <property type="protein sequence ID" value="AAM91200.1"/>
    <property type="molecule type" value="mRNA"/>
</dbReference>
<dbReference type="RefSeq" id="NP_196878.2">
    <property type="nucleotide sequence ID" value="NM_121377.5"/>
</dbReference>
<dbReference type="FunCoup" id="Q8RWN2">
    <property type="interactions" value="1308"/>
</dbReference>
<dbReference type="STRING" id="3702.Q8RWN2"/>
<dbReference type="TCDB" id="2.A.1.2.58">
    <property type="family name" value="the major facilitator superfamily (mfs)"/>
</dbReference>
<dbReference type="PaxDb" id="3702-AT5G13740.1"/>
<dbReference type="ProteomicsDB" id="232306"/>
<dbReference type="EnsemblPlants" id="AT5G13740.1">
    <property type="protein sequence ID" value="AT5G13740.1"/>
    <property type="gene ID" value="AT5G13740"/>
</dbReference>
<dbReference type="GeneID" id="831219"/>
<dbReference type="Gramene" id="AT5G13740.1">
    <property type="protein sequence ID" value="AT5G13740.1"/>
    <property type="gene ID" value="AT5G13740"/>
</dbReference>
<dbReference type="KEGG" id="ath:AT5G13740"/>
<dbReference type="Araport" id="AT5G13740"/>
<dbReference type="TAIR" id="AT5G13740">
    <property type="gene designation" value="ZIF1"/>
</dbReference>
<dbReference type="eggNOG" id="KOG2615">
    <property type="taxonomic scope" value="Eukaryota"/>
</dbReference>
<dbReference type="HOGENOM" id="CLU_001265_54_2_1"/>
<dbReference type="InParanoid" id="Q8RWN2"/>
<dbReference type="OMA" id="AWWACGI"/>
<dbReference type="PhylomeDB" id="Q8RWN2"/>
<dbReference type="PRO" id="PR:Q8RWN2"/>
<dbReference type="Proteomes" id="UP000006548">
    <property type="component" value="Chromosome 5"/>
</dbReference>
<dbReference type="ExpressionAtlas" id="Q8RWN2">
    <property type="expression patterns" value="baseline and differential"/>
</dbReference>
<dbReference type="GO" id="GO:0009705">
    <property type="term" value="C:plant-type vacuole membrane"/>
    <property type="evidence" value="ECO:0000314"/>
    <property type="project" value="TAIR"/>
</dbReference>
<dbReference type="GO" id="GO:0022857">
    <property type="term" value="F:transmembrane transporter activity"/>
    <property type="evidence" value="ECO:0007669"/>
    <property type="project" value="InterPro"/>
</dbReference>
<dbReference type="GO" id="GO:0009624">
    <property type="term" value="P:response to nematode"/>
    <property type="evidence" value="ECO:0007007"/>
    <property type="project" value="TAIR"/>
</dbReference>
<dbReference type="GO" id="GO:0010043">
    <property type="term" value="P:response to zinc ion"/>
    <property type="evidence" value="ECO:0000270"/>
    <property type="project" value="TAIR"/>
</dbReference>
<dbReference type="CDD" id="cd17330">
    <property type="entry name" value="MFS_SLC46_TetA_like"/>
    <property type="match status" value="1"/>
</dbReference>
<dbReference type="FunFam" id="1.20.1250.20:FF:000301">
    <property type="entry name" value="Protein ZINC INDUCED FACILITATOR-LIKE 1"/>
    <property type="match status" value="1"/>
</dbReference>
<dbReference type="Gene3D" id="1.20.1250.20">
    <property type="entry name" value="MFS general substrate transporter like domains"/>
    <property type="match status" value="1"/>
</dbReference>
<dbReference type="InterPro" id="IPR011701">
    <property type="entry name" value="MFS"/>
</dbReference>
<dbReference type="InterPro" id="IPR020846">
    <property type="entry name" value="MFS_dom"/>
</dbReference>
<dbReference type="InterPro" id="IPR036259">
    <property type="entry name" value="MFS_trans_sf"/>
</dbReference>
<dbReference type="InterPro" id="IPR001958">
    <property type="entry name" value="Tet-R_TetA/multi-R_MdtG-like"/>
</dbReference>
<dbReference type="PANTHER" id="PTHR23504">
    <property type="entry name" value="MAJOR FACILITATOR SUPERFAMILY DOMAIN-CONTAINING PROTEIN 10"/>
    <property type="match status" value="1"/>
</dbReference>
<dbReference type="PANTHER" id="PTHR23504:SF102">
    <property type="entry name" value="PROTEIN ZINC INDUCED FACILITATOR 1"/>
    <property type="match status" value="1"/>
</dbReference>
<dbReference type="Pfam" id="PF07690">
    <property type="entry name" value="MFS_1"/>
    <property type="match status" value="1"/>
</dbReference>
<dbReference type="PRINTS" id="PR01035">
    <property type="entry name" value="TCRTETA"/>
</dbReference>
<dbReference type="SUPFAM" id="SSF103473">
    <property type="entry name" value="MFS general substrate transporter"/>
    <property type="match status" value="1"/>
</dbReference>
<dbReference type="PROSITE" id="PS50850">
    <property type="entry name" value="MFS"/>
    <property type="match status" value="1"/>
</dbReference>
<protein>
    <recommendedName>
        <fullName>Protein ZINC INDUCED FACILITATOR 1</fullName>
    </recommendedName>
</protein>
<proteinExistence type="evidence at protein level"/>
<keyword id="KW-0472">Membrane</keyword>
<keyword id="KW-1185">Reference proteome</keyword>
<keyword id="KW-0812">Transmembrane</keyword>
<keyword id="KW-1133">Transmembrane helix</keyword>
<keyword id="KW-0813">Transport</keyword>
<keyword id="KW-0926">Vacuole</keyword>